<protein>
    <recommendedName>
        <fullName evidence="4">Extended FMRFamide-2</fullName>
        <shortName evidence="4">FMRFa-2</shortName>
    </recommendedName>
</protein>
<organism>
    <name type="scientific">Karoophasma botterkloofense</name>
    <name type="common">Gladiator</name>
    <name type="synonym">Heel-walker</name>
    <dbReference type="NCBI Taxonomy" id="253132"/>
    <lineage>
        <taxon>Eukaryota</taxon>
        <taxon>Metazoa</taxon>
        <taxon>Ecdysozoa</taxon>
        <taxon>Arthropoda</taxon>
        <taxon>Hexapoda</taxon>
        <taxon>Insecta</taxon>
        <taxon>Pterygota</taxon>
        <taxon>Neoptera</taxon>
        <taxon>Polyneoptera</taxon>
        <taxon>Mantophasmatodea</taxon>
        <taxon>Austrophasmatidae</taxon>
        <taxon>Karoophasma</taxon>
    </lineage>
</organism>
<dbReference type="GO" id="GO:0005576">
    <property type="term" value="C:extracellular region"/>
    <property type="evidence" value="ECO:0007669"/>
    <property type="project" value="UniProtKB-SubCell"/>
</dbReference>
<dbReference type="GO" id="GO:0007218">
    <property type="term" value="P:neuropeptide signaling pathway"/>
    <property type="evidence" value="ECO:0007669"/>
    <property type="project" value="UniProtKB-KW"/>
</dbReference>
<accession>B0M8U1</accession>
<reference evidence="5" key="1">
    <citation type="journal article" date="2012" name="Syst. Biol.">
        <title>Peptidomics-based phylogeny and biogeography of Mantophasmatodea (Hexapoda).</title>
        <authorList>
            <person name="Predel R."/>
            <person name="Neupert S."/>
            <person name="Huetteroth W."/>
            <person name="Kahnt J."/>
            <person name="Waidelich D."/>
            <person name="Roth S."/>
        </authorList>
    </citation>
    <scope>PROTEIN SEQUENCE</scope>
    <scope>AMIDATION AT ARG-8</scope>
    <source>
        <tissue evidence="3">Thoracic perisympathetic organs</tissue>
    </source>
</reference>
<sequence length="8" mass="965">SDYLQLAR</sequence>
<name>FAR2_KARBO</name>
<feature type="peptide" id="PRO_0000421488" description="Extended FMRFamide-2" evidence="3">
    <location>
        <begin position="1"/>
        <end position="8"/>
    </location>
</feature>
<feature type="modified residue" description="Arginine amide" evidence="3">
    <location>
        <position position="8"/>
    </location>
</feature>
<feature type="unsure residue" description="L or I" evidence="3">
    <location>
        <position position="4"/>
    </location>
</feature>
<feature type="unsure residue" description="L or I" evidence="3">
    <location>
        <position position="6"/>
    </location>
</feature>
<keyword id="KW-0027">Amidation</keyword>
<keyword id="KW-0903">Direct protein sequencing</keyword>
<keyword id="KW-0527">Neuropeptide</keyword>
<keyword id="KW-0964">Secreted</keyword>
<evidence type="ECO:0000250" key="1">
    <source>
        <dbReference type="UniProtKB" id="P34405"/>
    </source>
</evidence>
<evidence type="ECO:0000255" key="2"/>
<evidence type="ECO:0000269" key="3">
    <source>
    </source>
</evidence>
<evidence type="ECO:0000303" key="4">
    <source>
    </source>
</evidence>
<evidence type="ECO:0000305" key="5"/>
<evidence type="ECO:0000305" key="6">
    <source>
    </source>
</evidence>
<proteinExistence type="evidence at protein level"/>
<comment type="function">
    <text evidence="1">FMRFamides and FMRFamide-like peptides are neuropeptides.</text>
</comment>
<comment type="subcellular location">
    <subcellularLocation>
        <location evidence="6">Secreted</location>
    </subcellularLocation>
</comment>
<comment type="similarity">
    <text evidence="2">Belongs to the FARP (FMRF amide related peptide) family.</text>
</comment>